<feature type="chain" id="PRO_0000450106" description="Trihelix transcription factor DF1">
    <location>
        <begin position="1"/>
        <end position="603"/>
    </location>
</feature>
<feature type="domain" description="Myb-like 1" evidence="1">
    <location>
        <begin position="60"/>
        <end position="118"/>
    </location>
</feature>
<feature type="domain" description="Myb-like 2" evidence="1">
    <location>
        <begin position="401"/>
        <end position="465"/>
    </location>
</feature>
<feature type="region of interest" description="Disordered" evidence="2">
    <location>
        <begin position="149"/>
        <end position="201"/>
    </location>
</feature>
<feature type="region of interest" description="Disordered" evidence="2">
    <location>
        <begin position="220"/>
        <end position="249"/>
    </location>
</feature>
<feature type="region of interest" description="Disordered" evidence="2">
    <location>
        <begin position="333"/>
        <end position="408"/>
    </location>
</feature>
<feature type="region of interest" description="Disordered" evidence="2">
    <location>
        <begin position="532"/>
        <end position="603"/>
    </location>
</feature>
<feature type="compositionally biased region" description="Low complexity" evidence="2">
    <location>
        <begin position="168"/>
        <end position="178"/>
    </location>
</feature>
<feature type="compositionally biased region" description="Low complexity" evidence="2">
    <location>
        <begin position="189"/>
        <end position="198"/>
    </location>
</feature>
<feature type="compositionally biased region" description="Low complexity" evidence="2">
    <location>
        <begin position="221"/>
        <end position="236"/>
    </location>
</feature>
<feature type="compositionally biased region" description="Low complexity" evidence="2">
    <location>
        <begin position="344"/>
        <end position="362"/>
    </location>
</feature>
<feature type="compositionally biased region" description="Pro residues" evidence="2">
    <location>
        <begin position="363"/>
        <end position="376"/>
    </location>
</feature>
<feature type="compositionally biased region" description="Polar residues" evidence="2">
    <location>
        <begin position="381"/>
        <end position="408"/>
    </location>
</feature>
<feature type="compositionally biased region" description="Low complexity" evidence="2">
    <location>
        <begin position="532"/>
        <end position="555"/>
    </location>
</feature>
<feature type="compositionally biased region" description="Acidic residues" evidence="2">
    <location>
        <begin position="559"/>
        <end position="586"/>
    </location>
</feature>
<feature type="compositionally biased region" description="Low complexity" evidence="2">
    <location>
        <begin position="593"/>
        <end position="603"/>
    </location>
</feature>
<comment type="function">
    <text evidence="3 4 5">Transcription repressor that negatively regulates root hair growth by directly binding RSL4 promoter and repressing RSL4 expression (PubMed:29439132). Required for the synthesis of seed coat mucilage (PubMed:22735692, PubMed:25658798).</text>
</comment>
<comment type="subcellular location">
    <subcellularLocation>
        <location evidence="5">Nucleus</location>
    </subcellularLocation>
</comment>
<comment type="disruption phenotype">
    <text evidence="3 4 5">No visible phenotype under normal growth conditions, but the double mutant seedlings gtl1-1 and df1-1 exhibit increased root hair length (PubMed:29439132). Reduced amount of seed coat mucilage (PubMed:22735692, PubMed:25658798).</text>
</comment>
<comment type="miscellaneous">
    <text evidence="5">Plants overexpressing DF1 exhibit very short root hairs.</text>
</comment>
<proteinExistence type="predicted"/>
<evidence type="ECO:0000255" key="1">
    <source>
        <dbReference type="PROSITE-ProRule" id="PRU00133"/>
    </source>
</evidence>
<evidence type="ECO:0000256" key="2">
    <source>
        <dbReference type="SAM" id="MobiDB-lite"/>
    </source>
</evidence>
<evidence type="ECO:0000269" key="3">
    <source>
    </source>
</evidence>
<evidence type="ECO:0000269" key="4">
    <source>
    </source>
</evidence>
<evidence type="ECO:0000269" key="5">
    <source>
    </source>
</evidence>
<evidence type="ECO:0000303" key="6">
    <source>
    </source>
</evidence>
<evidence type="ECO:0000312" key="7">
    <source>
        <dbReference type="Araport" id="AT1G76880"/>
    </source>
</evidence>
<evidence type="ECO:0000312" key="8">
    <source>
        <dbReference type="EMBL" id="AAG51144.1"/>
    </source>
</evidence>
<name>DF1_ARATH</name>
<organism>
    <name type="scientific">Arabidopsis thaliana</name>
    <name type="common">Mouse-ear cress</name>
    <dbReference type="NCBI Taxonomy" id="3702"/>
    <lineage>
        <taxon>Eukaryota</taxon>
        <taxon>Viridiplantae</taxon>
        <taxon>Streptophyta</taxon>
        <taxon>Embryophyta</taxon>
        <taxon>Tracheophyta</taxon>
        <taxon>Spermatophyta</taxon>
        <taxon>Magnoliopsida</taxon>
        <taxon>eudicotyledons</taxon>
        <taxon>Gunneridae</taxon>
        <taxon>Pentapetalae</taxon>
        <taxon>rosids</taxon>
        <taxon>malvids</taxon>
        <taxon>Brassicales</taxon>
        <taxon>Brassicaceae</taxon>
        <taxon>Camelineae</taxon>
        <taxon>Arabidopsis</taxon>
    </lineage>
</organism>
<gene>
    <name evidence="6" type="primary">DF1</name>
    <name evidence="7" type="ordered locus">At1g76880</name>
    <name evidence="8" type="ORF">F7O12.5</name>
</gene>
<protein>
    <recommendedName>
        <fullName evidence="6">Trihelix transcription factor DF1</fullName>
    </recommendedName>
</protein>
<dbReference type="EMBL" id="AC079283">
    <property type="protein sequence ID" value="AAG51144.1"/>
    <property type="molecule type" value="Genomic_DNA"/>
</dbReference>
<dbReference type="EMBL" id="CP002684">
    <property type="protein sequence ID" value="AEE35898.1"/>
    <property type="molecule type" value="Genomic_DNA"/>
</dbReference>
<dbReference type="PIR" id="F96797">
    <property type="entry name" value="F96797"/>
</dbReference>
<dbReference type="RefSeq" id="NP_177814.1">
    <property type="nucleotide sequence ID" value="NM_106339.4"/>
</dbReference>
<dbReference type="SMR" id="Q9C6K3"/>
<dbReference type="FunCoup" id="Q9C6K3">
    <property type="interactions" value="220"/>
</dbReference>
<dbReference type="IntAct" id="Q9C6K3">
    <property type="interactions" value="4"/>
</dbReference>
<dbReference type="STRING" id="3702.Q9C6K3"/>
<dbReference type="iPTMnet" id="Q9C6K3"/>
<dbReference type="PaxDb" id="3702-AT1G76880.1"/>
<dbReference type="ProteomicsDB" id="189103"/>
<dbReference type="EnsemblPlants" id="AT1G76880.1">
    <property type="protein sequence ID" value="AT1G76880.1"/>
    <property type="gene ID" value="AT1G76880"/>
</dbReference>
<dbReference type="GeneID" id="844023"/>
<dbReference type="Gramene" id="AT1G76880.1">
    <property type="protein sequence ID" value="AT1G76880.1"/>
    <property type="gene ID" value="AT1G76880"/>
</dbReference>
<dbReference type="KEGG" id="ath:AT1G76880"/>
<dbReference type="Araport" id="AT1G76880"/>
<dbReference type="TAIR" id="AT1G76880">
    <property type="gene designation" value="DF1"/>
</dbReference>
<dbReference type="eggNOG" id="KOG4282">
    <property type="taxonomic scope" value="Eukaryota"/>
</dbReference>
<dbReference type="HOGENOM" id="CLU_013796_1_1_1"/>
<dbReference type="InParanoid" id="Q9C6K3"/>
<dbReference type="OMA" id="AKTDNGD"/>
<dbReference type="PhylomeDB" id="Q9C6K3"/>
<dbReference type="PRO" id="PR:Q9C6K3"/>
<dbReference type="Proteomes" id="UP000006548">
    <property type="component" value="Chromosome 1"/>
</dbReference>
<dbReference type="ExpressionAtlas" id="Q9C6K3">
    <property type="expression patterns" value="baseline and differential"/>
</dbReference>
<dbReference type="GO" id="GO:0005634">
    <property type="term" value="C:nucleus"/>
    <property type="evidence" value="ECO:0007669"/>
    <property type="project" value="UniProtKB-SubCell"/>
</dbReference>
<dbReference type="GO" id="GO:0003700">
    <property type="term" value="F:DNA-binding transcription factor activity"/>
    <property type="evidence" value="ECO:0000250"/>
    <property type="project" value="TAIR"/>
</dbReference>
<dbReference type="GO" id="GO:0000976">
    <property type="term" value="F:transcription cis-regulatory region binding"/>
    <property type="evidence" value="ECO:0000353"/>
    <property type="project" value="TAIR"/>
</dbReference>
<dbReference type="GO" id="GO:0019760">
    <property type="term" value="P:glucosinolate metabolic process"/>
    <property type="evidence" value="ECO:0000315"/>
    <property type="project" value="TAIR"/>
</dbReference>
<dbReference type="GO" id="GO:0010192">
    <property type="term" value="P:mucilage biosynthetic process"/>
    <property type="evidence" value="ECO:0000315"/>
    <property type="project" value="TAIR"/>
</dbReference>
<dbReference type="GO" id="GO:0006355">
    <property type="term" value="P:regulation of DNA-templated transcription"/>
    <property type="evidence" value="ECO:0000304"/>
    <property type="project" value="TAIR"/>
</dbReference>
<dbReference type="CDD" id="cd12203">
    <property type="entry name" value="GT1"/>
    <property type="match status" value="2"/>
</dbReference>
<dbReference type="FunFam" id="1.10.10.60:FF:000061">
    <property type="entry name" value="Trihelix transcription factor GT-2"/>
    <property type="match status" value="1"/>
</dbReference>
<dbReference type="FunFam" id="1.10.10.60:FF:000092">
    <property type="entry name" value="Trihelix transcription factor GT-2"/>
    <property type="match status" value="1"/>
</dbReference>
<dbReference type="Gene3D" id="1.10.10.60">
    <property type="entry name" value="Homeodomain-like"/>
    <property type="match status" value="2"/>
</dbReference>
<dbReference type="InterPro" id="IPR044822">
    <property type="entry name" value="Myb_DNA-bind_4"/>
</dbReference>
<dbReference type="InterPro" id="IPR001005">
    <property type="entry name" value="SANT/Myb"/>
</dbReference>
<dbReference type="PANTHER" id="PTHR21654">
    <property type="entry name" value="FI21293P1"/>
    <property type="match status" value="1"/>
</dbReference>
<dbReference type="PANTHER" id="PTHR21654:SF59">
    <property type="entry name" value="TRIHELIX TRANSCRIPTION FACTOR DF1"/>
    <property type="match status" value="1"/>
</dbReference>
<dbReference type="Pfam" id="PF13837">
    <property type="entry name" value="Myb_DNA-bind_4"/>
    <property type="match status" value="2"/>
</dbReference>
<dbReference type="SMART" id="SM00717">
    <property type="entry name" value="SANT"/>
    <property type="match status" value="2"/>
</dbReference>
<dbReference type="PROSITE" id="PS50090">
    <property type="entry name" value="MYB_LIKE"/>
    <property type="match status" value="2"/>
</dbReference>
<sequence>MMQLGGGTPTTTAAATTVTTATAPPPQSNNNDSAATEAAAAAVGAFEVSEEMHDRGFGGNRWPRQETLALLKIRSDMGIAFRDASVKGPLWEEVSRKMAEHGYIRNAKKCKEKFENVYKYHKRTKEGRTGKSEGKTYRFFDQLEALESQSTTSLHHHQQQTPLRPQQNNNNNNNNNNNSSIFSTPPPVTTVMPTLPSSSIPPYTQQINVPSFPNISGDFLSDNSTSSSSSYSTSSDMEMGGGTATTRKKRKRKWKVFFERLMKQVVDKQEELQRKFLEAVEKREHERLVREESWRVQEIARINREHEILAQERSMSAAKDAAVMAFLQKLSEKQPNQPQPQPQPQQVRPSMQLNNNNQQQPPQRSPPPQPPAPLPQPIQAVVSTLDTTKTDNGGDQNMTPAASASSSRWPKVEIEALIKLRTNLDSKYQENGPKGPLWEEISAGMRRLGFNRNSKRCKEKWENINKYFKKVKESNKKRPEDSKTCPYFHQLDALYRERNKFHSNNNIAASSSSSGLVKPDNSVPLMVQPEQQWPPAVTTATTTPAAAQPDQQSQPSEQNFDDEEGTDEEYDDEDEEEENEEEEGGEFELVPSNNNNNKTTNNL</sequence>
<reference key="1">
    <citation type="journal article" date="2000" name="Nature">
        <title>Sequence and analysis of chromosome 1 of the plant Arabidopsis thaliana.</title>
        <authorList>
            <person name="Theologis A."/>
            <person name="Ecker J.R."/>
            <person name="Palm C.J."/>
            <person name="Federspiel N.A."/>
            <person name="Kaul S."/>
            <person name="White O."/>
            <person name="Alonso J."/>
            <person name="Altafi H."/>
            <person name="Araujo R."/>
            <person name="Bowman C.L."/>
            <person name="Brooks S.Y."/>
            <person name="Buehler E."/>
            <person name="Chan A."/>
            <person name="Chao Q."/>
            <person name="Chen H."/>
            <person name="Cheuk R.F."/>
            <person name="Chin C.W."/>
            <person name="Chung M.K."/>
            <person name="Conn L."/>
            <person name="Conway A.B."/>
            <person name="Conway A.R."/>
            <person name="Creasy T.H."/>
            <person name="Dewar K."/>
            <person name="Dunn P."/>
            <person name="Etgu P."/>
            <person name="Feldblyum T.V."/>
            <person name="Feng J.-D."/>
            <person name="Fong B."/>
            <person name="Fujii C.Y."/>
            <person name="Gill J.E."/>
            <person name="Goldsmith A.D."/>
            <person name="Haas B."/>
            <person name="Hansen N.F."/>
            <person name="Hughes B."/>
            <person name="Huizar L."/>
            <person name="Hunter J.L."/>
            <person name="Jenkins J."/>
            <person name="Johnson-Hopson C."/>
            <person name="Khan S."/>
            <person name="Khaykin E."/>
            <person name="Kim C.J."/>
            <person name="Koo H.L."/>
            <person name="Kremenetskaia I."/>
            <person name="Kurtz D.B."/>
            <person name="Kwan A."/>
            <person name="Lam B."/>
            <person name="Langin-Hooper S."/>
            <person name="Lee A."/>
            <person name="Lee J.M."/>
            <person name="Lenz C.A."/>
            <person name="Li J.H."/>
            <person name="Li Y.-P."/>
            <person name="Lin X."/>
            <person name="Liu S.X."/>
            <person name="Liu Z.A."/>
            <person name="Luros J.S."/>
            <person name="Maiti R."/>
            <person name="Marziali A."/>
            <person name="Militscher J."/>
            <person name="Miranda M."/>
            <person name="Nguyen M."/>
            <person name="Nierman W.C."/>
            <person name="Osborne B.I."/>
            <person name="Pai G."/>
            <person name="Peterson J."/>
            <person name="Pham P.K."/>
            <person name="Rizzo M."/>
            <person name="Rooney T."/>
            <person name="Rowley D."/>
            <person name="Sakano H."/>
            <person name="Salzberg S.L."/>
            <person name="Schwartz J.R."/>
            <person name="Shinn P."/>
            <person name="Southwick A.M."/>
            <person name="Sun H."/>
            <person name="Tallon L.J."/>
            <person name="Tambunga G."/>
            <person name="Toriumi M.J."/>
            <person name="Town C.D."/>
            <person name="Utterback T."/>
            <person name="Van Aken S."/>
            <person name="Vaysberg M."/>
            <person name="Vysotskaia V.S."/>
            <person name="Walker M."/>
            <person name="Wu D."/>
            <person name="Yu G."/>
            <person name="Fraser C.M."/>
            <person name="Venter J.C."/>
            <person name="Davis R.W."/>
        </authorList>
    </citation>
    <scope>NUCLEOTIDE SEQUENCE [LARGE SCALE GENOMIC DNA]</scope>
    <source>
        <strain>cv. Columbia</strain>
    </source>
</reference>
<reference key="2">
    <citation type="journal article" date="2017" name="Plant J.">
        <title>Araport11: a complete reannotation of the Arabidopsis thaliana reference genome.</title>
        <authorList>
            <person name="Cheng C.Y."/>
            <person name="Krishnakumar V."/>
            <person name="Chan A.P."/>
            <person name="Thibaud-Nissen F."/>
            <person name="Schobel S."/>
            <person name="Town C.D."/>
        </authorList>
    </citation>
    <scope>GENOME REANNOTATION</scope>
    <source>
        <strain>cv. Columbia</strain>
    </source>
</reference>
<reference key="3">
    <citation type="journal article" date="2012" name="Mol. Biosyst.">
        <title>LASSO modeling of the Arabidopsis thaliana seed/seedling transcriptome: a model case for detection of novel mucilage and pectin metabolism genes.</title>
        <authorList>
            <person name="Vasilevski A."/>
            <person name="Giorgi F.M."/>
            <person name="Bertinetti L."/>
            <person name="Usadel B."/>
        </authorList>
    </citation>
    <scope>FUNCTION</scope>
    <scope>DISRUPTION PHENOTYPE</scope>
</reference>
<reference key="4">
    <citation type="journal article" date="2015" name="Int. J. Mol. Sci.">
        <title>Starting to gel: how Arabidopsis seed coat epidermal cells produce specialized secondary cell walls.</title>
        <authorList>
            <person name="Voiniciuc C."/>
            <person name="Yang B."/>
            <person name="Schmidt M.H.-W."/>
            <person name="Guenl M."/>
            <person name="Usadel B."/>
        </authorList>
    </citation>
    <scope>FUNCTION</scope>
    <scope>DISRUPTION PHENOTYPE</scope>
</reference>
<reference key="5">
    <citation type="journal article" date="2018" name="Development">
        <title>GTL1 and DF1 regulate root hair growth through transcriptional repression of ROOT HAIR DEFECTIVE 6-LIKE 4 in Arabidopsis.</title>
        <authorList>
            <person name="Shibata M."/>
            <person name="Breuer C."/>
            <person name="Kawamura A."/>
            <person name="Clark N.M."/>
            <person name="Rymen B."/>
            <person name="Braidwood L."/>
            <person name="Morohashi K."/>
            <person name="Busch W."/>
            <person name="Benfey P.N."/>
            <person name="Sozzani R."/>
            <person name="Sugimoto K."/>
        </authorList>
    </citation>
    <scope>FUNCTION</scope>
    <scope>SUBCELLULAR LOCATION</scope>
    <scope>DISRUPTION PHENOTYPE</scope>
</reference>
<accession>Q9C6K3</accession>
<keyword id="KW-0238">DNA-binding</keyword>
<keyword id="KW-0539">Nucleus</keyword>
<keyword id="KW-1185">Reference proteome</keyword>
<keyword id="KW-0677">Repeat</keyword>
<keyword id="KW-0678">Repressor</keyword>
<keyword id="KW-0804">Transcription</keyword>
<keyword id="KW-0805">Transcription regulation</keyword>